<accession>Q5ZRX1</accession>
<comment type="function">
    <text evidence="1">Binds to DNA and alters its conformation. May be involved in regulation of gene expression, nucleoid organization and DNA protection.</text>
</comment>
<comment type="subunit">
    <text evidence="1">Homodimer.</text>
</comment>
<comment type="subcellular location">
    <subcellularLocation>
        <location evidence="1">Cytoplasm</location>
        <location evidence="1">Nucleoid</location>
    </subcellularLocation>
</comment>
<comment type="similarity">
    <text evidence="1">Belongs to the YbaB/EbfC family.</text>
</comment>
<proteinExistence type="inferred from homology"/>
<name>Y2755_LEGPH</name>
<feature type="chain" id="PRO_1000003762" description="Nucleoid-associated protein lpg2755">
    <location>
        <begin position="1"/>
        <end position="112"/>
    </location>
</feature>
<keyword id="KW-0963">Cytoplasm</keyword>
<keyword id="KW-0238">DNA-binding</keyword>
<keyword id="KW-1185">Reference proteome</keyword>
<gene>
    <name type="ordered locus">lpg2755</name>
</gene>
<evidence type="ECO:0000255" key="1">
    <source>
        <dbReference type="HAMAP-Rule" id="MF_00274"/>
    </source>
</evidence>
<sequence>MDINQNLGNLMKEAQKMQQRMQEAQQQLSQLVVSGESGGGMVTIKMNGRHDVTEVKIKPTLMDEDIEMLEDLIAAAVNDAVRKIEKASKEKISQLTAGLNIPTDLMGDKEGE</sequence>
<reference key="1">
    <citation type="journal article" date="2004" name="Science">
        <title>The genomic sequence of the accidental pathogen Legionella pneumophila.</title>
        <authorList>
            <person name="Chien M."/>
            <person name="Morozova I."/>
            <person name="Shi S."/>
            <person name="Sheng H."/>
            <person name="Chen J."/>
            <person name="Gomez S.M."/>
            <person name="Asamani G."/>
            <person name="Hill K."/>
            <person name="Nuara J."/>
            <person name="Feder M."/>
            <person name="Rineer J."/>
            <person name="Greenberg J.J."/>
            <person name="Steshenko V."/>
            <person name="Park S.H."/>
            <person name="Zhao B."/>
            <person name="Teplitskaya E."/>
            <person name="Edwards J.R."/>
            <person name="Pampou S."/>
            <person name="Georghiou A."/>
            <person name="Chou I.-C."/>
            <person name="Iannuccilli W."/>
            <person name="Ulz M.E."/>
            <person name="Kim D.H."/>
            <person name="Geringer-Sameth A."/>
            <person name="Goldsberry C."/>
            <person name="Morozov P."/>
            <person name="Fischer S.G."/>
            <person name="Segal G."/>
            <person name="Qu X."/>
            <person name="Rzhetsky A."/>
            <person name="Zhang P."/>
            <person name="Cayanis E."/>
            <person name="De Jong P.J."/>
            <person name="Ju J."/>
            <person name="Kalachikov S."/>
            <person name="Shuman H.A."/>
            <person name="Russo J.J."/>
        </authorList>
    </citation>
    <scope>NUCLEOTIDE SEQUENCE [LARGE SCALE GENOMIC DNA]</scope>
    <source>
        <strain>Philadelphia 1 / ATCC 33152 / DSM 7513</strain>
    </source>
</reference>
<dbReference type="EMBL" id="AE017354">
    <property type="protein sequence ID" value="AAU28806.1"/>
    <property type="molecule type" value="Genomic_DNA"/>
</dbReference>
<dbReference type="RefSeq" id="WP_010948445.1">
    <property type="nucleotide sequence ID" value="NC_002942.5"/>
</dbReference>
<dbReference type="RefSeq" id="YP_096753.1">
    <property type="nucleotide sequence ID" value="NC_002942.5"/>
</dbReference>
<dbReference type="SMR" id="Q5ZRX1"/>
<dbReference type="STRING" id="272624.lpg2755"/>
<dbReference type="PaxDb" id="272624-lpg2755"/>
<dbReference type="KEGG" id="lpn:lpg2755"/>
<dbReference type="PATRIC" id="fig|272624.6.peg.2934"/>
<dbReference type="eggNOG" id="COG0718">
    <property type="taxonomic scope" value="Bacteria"/>
</dbReference>
<dbReference type="HOGENOM" id="CLU_140930_0_0_6"/>
<dbReference type="OrthoDB" id="9808738at2"/>
<dbReference type="Proteomes" id="UP000000609">
    <property type="component" value="Chromosome"/>
</dbReference>
<dbReference type="GO" id="GO:0043590">
    <property type="term" value="C:bacterial nucleoid"/>
    <property type="evidence" value="ECO:0007669"/>
    <property type="project" value="UniProtKB-UniRule"/>
</dbReference>
<dbReference type="GO" id="GO:0005829">
    <property type="term" value="C:cytosol"/>
    <property type="evidence" value="ECO:0007669"/>
    <property type="project" value="TreeGrafter"/>
</dbReference>
<dbReference type="GO" id="GO:0003677">
    <property type="term" value="F:DNA binding"/>
    <property type="evidence" value="ECO:0007669"/>
    <property type="project" value="UniProtKB-UniRule"/>
</dbReference>
<dbReference type="Gene3D" id="3.30.1310.10">
    <property type="entry name" value="Nucleoid-associated protein YbaB-like domain"/>
    <property type="match status" value="1"/>
</dbReference>
<dbReference type="HAMAP" id="MF_00274">
    <property type="entry name" value="DNA_YbaB_EbfC"/>
    <property type="match status" value="1"/>
</dbReference>
<dbReference type="InterPro" id="IPR036894">
    <property type="entry name" value="YbaB-like_sf"/>
</dbReference>
<dbReference type="InterPro" id="IPR004401">
    <property type="entry name" value="YbaB/EbfC"/>
</dbReference>
<dbReference type="NCBIfam" id="TIGR00103">
    <property type="entry name" value="DNA_YbaB_EbfC"/>
    <property type="match status" value="1"/>
</dbReference>
<dbReference type="PANTHER" id="PTHR33449">
    <property type="entry name" value="NUCLEOID-ASSOCIATED PROTEIN YBAB"/>
    <property type="match status" value="1"/>
</dbReference>
<dbReference type="PANTHER" id="PTHR33449:SF1">
    <property type="entry name" value="NUCLEOID-ASSOCIATED PROTEIN YBAB"/>
    <property type="match status" value="1"/>
</dbReference>
<dbReference type="Pfam" id="PF02575">
    <property type="entry name" value="YbaB_DNA_bd"/>
    <property type="match status" value="1"/>
</dbReference>
<dbReference type="PIRSF" id="PIRSF004555">
    <property type="entry name" value="UCP004555"/>
    <property type="match status" value="1"/>
</dbReference>
<dbReference type="SUPFAM" id="SSF82607">
    <property type="entry name" value="YbaB-like"/>
    <property type="match status" value="1"/>
</dbReference>
<protein>
    <recommendedName>
        <fullName evidence="1">Nucleoid-associated protein lpg2755</fullName>
    </recommendedName>
</protein>
<organism>
    <name type="scientific">Legionella pneumophila subsp. pneumophila (strain Philadelphia 1 / ATCC 33152 / DSM 7513)</name>
    <dbReference type="NCBI Taxonomy" id="272624"/>
    <lineage>
        <taxon>Bacteria</taxon>
        <taxon>Pseudomonadati</taxon>
        <taxon>Pseudomonadota</taxon>
        <taxon>Gammaproteobacteria</taxon>
        <taxon>Legionellales</taxon>
        <taxon>Legionellaceae</taxon>
        <taxon>Legionella</taxon>
    </lineage>
</organism>